<sequence length="656" mass="69823">MQLRHINIRALIAEAGGDPWAIEHSLHAGRPAQIAELAEAFHAAGRYTAEANAAFEEARRRFEASWNRENGEHPINDSAEVQRVTAALGVQSLQLPKIGVDLENIAADLAEAQRAAAGRIATLESQLQRIDDQLDQALELEHDPRLAAAERSELDALITCLEQDAIDDTASALGQLQSIRAGYSDHLQQSLAMLRADGYDGAGLQGLDAPQSPVKPEEPIQIPPPGTGAPEVHRWWTSLTSEERQRLIAEHPEQIGNLNGVPVSARSDANIAVMTRDLNRVRDIATRYRTSVDDVLGDPAKYGLSAGDITRYRNADETKKGLDHNARNDPRNPSPVYLFAYDPMAFGGKGRAAIAIGNPDTAKHTAVIVPGTSSSVKGGWLHDNHDDALNLFNQAKAADPNNPTAVIAWMGYDAPNDFTDPRIATPMLARIGGAALAEDVNGLWVTHLGVGQNVTVLGHSYGSTTVADAFALGGMHANDAVLLGCPGTDLAHSAASFHLDGGRVYVGAASTDPISMLGQLDSLSQYVNRGNLAGQLQGLAVGLGTDPAGDGFGSVRFRAEVPNSDGINPHDHSYYYHRGSEALRSMADIASGHGDALASDGMLAQPRHQPGVEIDIPGLGSVEIDIPGTPASIDPEWSRPPGSITDDHVFDAPLHR</sequence>
<gene>
    <name type="ordered locus">Rv2079</name>
    <name type="ORF">MTCY49.18</name>
</gene>
<evidence type="ECO:0000256" key="1">
    <source>
        <dbReference type="SAM" id="MobiDB-lite"/>
    </source>
</evidence>
<dbReference type="EMBL" id="AL123456">
    <property type="protein sequence ID" value="CCP44854.1"/>
    <property type="molecule type" value="Genomic_DNA"/>
</dbReference>
<dbReference type="PIR" id="B70766">
    <property type="entry name" value="B70766"/>
</dbReference>
<dbReference type="RefSeq" id="NP_216595.1">
    <property type="nucleotide sequence ID" value="NC_000962.3"/>
</dbReference>
<dbReference type="RefSeq" id="WP_003911742.1">
    <property type="nucleotide sequence ID" value="NZ_NVQJ01000047.1"/>
</dbReference>
<dbReference type="SMR" id="P9WLK7"/>
<dbReference type="STRING" id="83332.Rv2079"/>
<dbReference type="ESTHER" id="myctu-y2079">
    <property type="family name" value="Duf_1023"/>
</dbReference>
<dbReference type="PaxDb" id="83332-Rv2079"/>
<dbReference type="DNASU" id="887333"/>
<dbReference type="GeneID" id="887333"/>
<dbReference type="KEGG" id="mtu:Rv2079"/>
<dbReference type="KEGG" id="mtv:RVBD_2079"/>
<dbReference type="TubercuList" id="Rv2079"/>
<dbReference type="eggNOG" id="COG1511">
    <property type="taxonomic scope" value="Bacteria"/>
</dbReference>
<dbReference type="InParanoid" id="P9WLK7"/>
<dbReference type="OrthoDB" id="5969911at2"/>
<dbReference type="PhylomeDB" id="P9WLK7"/>
<dbReference type="Proteomes" id="UP000001584">
    <property type="component" value="Chromosome"/>
</dbReference>
<dbReference type="InterPro" id="IPR010427">
    <property type="entry name" value="DUF1023"/>
</dbReference>
<dbReference type="InterPro" id="IPR054469">
    <property type="entry name" value="Pred_hydrolase_N"/>
</dbReference>
<dbReference type="Pfam" id="PF06259">
    <property type="entry name" value="Abhydrolase_8"/>
    <property type="match status" value="1"/>
</dbReference>
<dbReference type="Pfam" id="PF22905">
    <property type="entry name" value="Hydro_N_hd"/>
    <property type="match status" value="1"/>
</dbReference>
<feature type="chain" id="PRO_0000103951" description="Uncharacterized protein Rv2079">
    <location>
        <begin position="1"/>
        <end position="656"/>
    </location>
</feature>
<feature type="region of interest" description="Disordered" evidence="1">
    <location>
        <begin position="623"/>
        <end position="656"/>
    </location>
</feature>
<feature type="compositionally biased region" description="Basic and acidic residues" evidence="1">
    <location>
        <begin position="645"/>
        <end position="656"/>
    </location>
</feature>
<reference key="1">
    <citation type="journal article" date="1998" name="Nature">
        <title>Deciphering the biology of Mycobacterium tuberculosis from the complete genome sequence.</title>
        <authorList>
            <person name="Cole S.T."/>
            <person name="Brosch R."/>
            <person name="Parkhill J."/>
            <person name="Garnier T."/>
            <person name="Churcher C.M."/>
            <person name="Harris D.E."/>
            <person name="Gordon S.V."/>
            <person name="Eiglmeier K."/>
            <person name="Gas S."/>
            <person name="Barry C.E. III"/>
            <person name="Tekaia F."/>
            <person name="Badcock K."/>
            <person name="Basham D."/>
            <person name="Brown D."/>
            <person name="Chillingworth T."/>
            <person name="Connor R."/>
            <person name="Davies R.M."/>
            <person name="Devlin K."/>
            <person name="Feltwell T."/>
            <person name="Gentles S."/>
            <person name="Hamlin N."/>
            <person name="Holroyd S."/>
            <person name="Hornsby T."/>
            <person name="Jagels K."/>
            <person name="Krogh A."/>
            <person name="McLean J."/>
            <person name="Moule S."/>
            <person name="Murphy L.D."/>
            <person name="Oliver S."/>
            <person name="Osborne J."/>
            <person name="Quail M.A."/>
            <person name="Rajandream M.A."/>
            <person name="Rogers J."/>
            <person name="Rutter S."/>
            <person name="Seeger K."/>
            <person name="Skelton S."/>
            <person name="Squares S."/>
            <person name="Squares R."/>
            <person name="Sulston J.E."/>
            <person name="Taylor K."/>
            <person name="Whitehead S."/>
            <person name="Barrell B.G."/>
        </authorList>
    </citation>
    <scope>NUCLEOTIDE SEQUENCE [LARGE SCALE GENOMIC DNA]</scope>
    <source>
        <strain>ATCC 25618 / H37Rv</strain>
    </source>
</reference>
<organism>
    <name type="scientific">Mycobacterium tuberculosis (strain ATCC 25618 / H37Rv)</name>
    <dbReference type="NCBI Taxonomy" id="83332"/>
    <lineage>
        <taxon>Bacteria</taxon>
        <taxon>Bacillati</taxon>
        <taxon>Actinomycetota</taxon>
        <taxon>Actinomycetes</taxon>
        <taxon>Mycobacteriales</taxon>
        <taxon>Mycobacteriaceae</taxon>
        <taxon>Mycobacterium</taxon>
        <taxon>Mycobacterium tuberculosis complex</taxon>
    </lineage>
</organism>
<name>Y2079_MYCTU</name>
<proteinExistence type="predicted"/>
<protein>
    <recommendedName>
        <fullName>Uncharacterized protein Rv2079</fullName>
    </recommendedName>
</protein>
<keyword id="KW-1185">Reference proteome</keyword>
<accession>P9WLK7</accession>
<accession>L0TBF5</accession>
<accession>Q10687</accession>